<accession>B5Z2W0</accession>
<organism>
    <name type="scientific">Escherichia coli O157:H7 (strain EC4115 / EHEC)</name>
    <dbReference type="NCBI Taxonomy" id="444450"/>
    <lineage>
        <taxon>Bacteria</taxon>
        <taxon>Pseudomonadati</taxon>
        <taxon>Pseudomonadota</taxon>
        <taxon>Gammaproteobacteria</taxon>
        <taxon>Enterobacterales</taxon>
        <taxon>Enterobacteriaceae</taxon>
        <taxon>Escherichia</taxon>
    </lineage>
</organism>
<keyword id="KW-0275">Fatty acid biosynthesis</keyword>
<keyword id="KW-0276">Fatty acid metabolism</keyword>
<keyword id="KW-0378">Hydrolase</keyword>
<keyword id="KW-0444">Lipid biosynthesis</keyword>
<keyword id="KW-0443">Lipid metabolism</keyword>
<dbReference type="EC" id="3.1.4.14" evidence="1"/>
<dbReference type="EMBL" id="CP001164">
    <property type="protein sequence ID" value="ACI37641.1"/>
    <property type="molecule type" value="Genomic_DNA"/>
</dbReference>
<dbReference type="RefSeq" id="WP_001009882.1">
    <property type="nucleotide sequence ID" value="NC_011353.1"/>
</dbReference>
<dbReference type="SMR" id="B5Z2W0"/>
<dbReference type="GeneID" id="75170421"/>
<dbReference type="KEGG" id="ecf:ECH74115_0484"/>
<dbReference type="HOGENOM" id="CLU_099370_1_0_6"/>
<dbReference type="GO" id="GO:0008770">
    <property type="term" value="F:[acyl-carrier-protein] phosphodiesterase activity"/>
    <property type="evidence" value="ECO:0007669"/>
    <property type="project" value="UniProtKB-UniRule"/>
</dbReference>
<dbReference type="GO" id="GO:0006633">
    <property type="term" value="P:fatty acid biosynthetic process"/>
    <property type="evidence" value="ECO:0007669"/>
    <property type="project" value="UniProtKB-UniRule"/>
</dbReference>
<dbReference type="HAMAP" id="MF_01950">
    <property type="entry name" value="AcpH"/>
    <property type="match status" value="1"/>
</dbReference>
<dbReference type="InterPro" id="IPR007431">
    <property type="entry name" value="ACP_PD"/>
</dbReference>
<dbReference type="InterPro" id="IPR023491">
    <property type="entry name" value="ACP_phosphodiesterase_gpbac"/>
</dbReference>
<dbReference type="NCBIfam" id="NF007466">
    <property type="entry name" value="PRK10045.1"/>
    <property type="match status" value="1"/>
</dbReference>
<dbReference type="PANTHER" id="PTHR38764">
    <property type="entry name" value="ACYL CARRIER PROTEIN PHOSPHODIESTERASE"/>
    <property type="match status" value="1"/>
</dbReference>
<dbReference type="PANTHER" id="PTHR38764:SF1">
    <property type="entry name" value="ACYL CARRIER PROTEIN PHOSPHODIESTERASE"/>
    <property type="match status" value="1"/>
</dbReference>
<dbReference type="Pfam" id="PF04336">
    <property type="entry name" value="ACP_PD"/>
    <property type="match status" value="1"/>
</dbReference>
<dbReference type="PIRSF" id="PIRSF011489">
    <property type="entry name" value="DUF479"/>
    <property type="match status" value="1"/>
</dbReference>
<proteinExistence type="inferred from homology"/>
<gene>
    <name evidence="1" type="primary">acpH</name>
    <name type="ordered locus">ECH74115_0484</name>
</gene>
<name>ACPH_ECO5E</name>
<evidence type="ECO:0000255" key="1">
    <source>
        <dbReference type="HAMAP-Rule" id="MF_01950"/>
    </source>
</evidence>
<sequence length="193" mass="22917">MNFLAHLHLAHLAESSLSGNLLADFVRGNPEESFPPDVVAGIHMHRRIDVLTDNLPEVREAREWFRSETRRVAPITLDVMWDHFLSRHWSQLSPDFPLQEFVCYAREQVMTILPDSPPRFINLNNYLWSEQWLVRYRDMDFIQNVLNGMASRRPRLDALRDSWYDLDAHYAALETRFWQFYPRMMAQASRKAL</sequence>
<feature type="chain" id="PRO_1000188800" description="Acyl carrier protein phosphodiesterase">
    <location>
        <begin position="1"/>
        <end position="193"/>
    </location>
</feature>
<protein>
    <recommendedName>
        <fullName evidence="1">Acyl carrier protein phosphodiesterase</fullName>
        <shortName evidence="1">ACP phosphodiesterase</shortName>
        <ecNumber evidence="1">3.1.4.14</ecNumber>
    </recommendedName>
</protein>
<reference key="1">
    <citation type="journal article" date="2011" name="Proc. Natl. Acad. Sci. U.S.A.">
        <title>Genomic anatomy of Escherichia coli O157:H7 outbreaks.</title>
        <authorList>
            <person name="Eppinger M."/>
            <person name="Mammel M.K."/>
            <person name="Leclerc J.E."/>
            <person name="Ravel J."/>
            <person name="Cebula T.A."/>
        </authorList>
    </citation>
    <scope>NUCLEOTIDE SEQUENCE [LARGE SCALE GENOMIC DNA]</scope>
    <source>
        <strain>EC4115 / EHEC</strain>
    </source>
</reference>
<comment type="function">
    <text evidence="1">Converts holo-ACP to apo-ACP by hydrolytic cleavage of the phosphopantetheine prosthetic group from ACP.</text>
</comment>
<comment type="catalytic activity">
    <reaction evidence="1">
        <text>holo-[ACP] + H2O = apo-[ACP] + (R)-4'-phosphopantetheine + H(+)</text>
        <dbReference type="Rhea" id="RHEA:20537"/>
        <dbReference type="Rhea" id="RHEA-COMP:9685"/>
        <dbReference type="Rhea" id="RHEA-COMP:9690"/>
        <dbReference type="ChEBI" id="CHEBI:15377"/>
        <dbReference type="ChEBI" id="CHEBI:15378"/>
        <dbReference type="ChEBI" id="CHEBI:29999"/>
        <dbReference type="ChEBI" id="CHEBI:61723"/>
        <dbReference type="ChEBI" id="CHEBI:64479"/>
        <dbReference type="EC" id="3.1.4.14"/>
    </reaction>
</comment>
<comment type="similarity">
    <text evidence="1">Belongs to the AcpH family.</text>
</comment>